<dbReference type="EC" id="6.2.1.2" evidence="2"/>
<dbReference type="EC" id="6.2.1.3" evidence="2"/>
<dbReference type="EC" id="6.2.1.42" evidence="2"/>
<dbReference type="EMBL" id="CP000854">
    <property type="protein sequence ID" value="ACC43405.1"/>
    <property type="molecule type" value="Genomic_DNA"/>
</dbReference>
<dbReference type="RefSeq" id="WP_012396525.1">
    <property type="nucleotide sequence ID" value="NC_010612.1"/>
</dbReference>
<dbReference type="SMR" id="B2HI05"/>
<dbReference type="STRING" id="216594.MMAR_5001"/>
<dbReference type="GeneID" id="34340113"/>
<dbReference type="KEGG" id="mmi:MMAR_5001"/>
<dbReference type="eggNOG" id="COG0318">
    <property type="taxonomic scope" value="Bacteria"/>
</dbReference>
<dbReference type="HOGENOM" id="CLU_000022_59_0_11"/>
<dbReference type="OrthoDB" id="3443462at2"/>
<dbReference type="UniPathway" id="UPA00094"/>
<dbReference type="UniPathway" id="UPA00296"/>
<dbReference type="Proteomes" id="UP000001190">
    <property type="component" value="Chromosome"/>
</dbReference>
<dbReference type="GO" id="GO:0005524">
    <property type="term" value="F:ATP binding"/>
    <property type="evidence" value="ECO:0007669"/>
    <property type="project" value="UniProtKB-KW"/>
</dbReference>
<dbReference type="GO" id="GO:0004467">
    <property type="term" value="F:long-chain fatty acid-CoA ligase activity"/>
    <property type="evidence" value="ECO:0007669"/>
    <property type="project" value="UniProtKB-EC"/>
</dbReference>
<dbReference type="GO" id="GO:0031956">
    <property type="term" value="F:medium-chain fatty acid-CoA ligase activity"/>
    <property type="evidence" value="ECO:0007669"/>
    <property type="project" value="UniProtKB-EC"/>
</dbReference>
<dbReference type="GO" id="GO:0008203">
    <property type="term" value="P:cholesterol metabolic process"/>
    <property type="evidence" value="ECO:0007669"/>
    <property type="project" value="UniProtKB-UniPathway"/>
</dbReference>
<dbReference type="GO" id="GO:0006633">
    <property type="term" value="P:fatty acid biosynthetic process"/>
    <property type="evidence" value="ECO:0007669"/>
    <property type="project" value="UniProtKB-UniPathway"/>
</dbReference>
<dbReference type="CDD" id="cd05924">
    <property type="entry name" value="FACL_like_5"/>
    <property type="match status" value="1"/>
</dbReference>
<dbReference type="Gene3D" id="3.30.300.30">
    <property type="match status" value="1"/>
</dbReference>
<dbReference type="Gene3D" id="3.40.50.12780">
    <property type="entry name" value="N-terminal domain of ligase-like"/>
    <property type="match status" value="1"/>
</dbReference>
<dbReference type="InterPro" id="IPR025110">
    <property type="entry name" value="AMP-bd_C"/>
</dbReference>
<dbReference type="InterPro" id="IPR045851">
    <property type="entry name" value="AMP-bd_C_sf"/>
</dbReference>
<dbReference type="InterPro" id="IPR020845">
    <property type="entry name" value="AMP-binding_CS"/>
</dbReference>
<dbReference type="InterPro" id="IPR000873">
    <property type="entry name" value="AMP-dep_synth/lig_dom"/>
</dbReference>
<dbReference type="InterPro" id="IPR042099">
    <property type="entry name" value="ANL_N_sf"/>
</dbReference>
<dbReference type="InterPro" id="IPR050237">
    <property type="entry name" value="ATP-dep_AMP-bd_enzyme"/>
</dbReference>
<dbReference type="NCBIfam" id="NF005863">
    <property type="entry name" value="PRK07798.1"/>
    <property type="match status" value="1"/>
</dbReference>
<dbReference type="PANTHER" id="PTHR43767">
    <property type="entry name" value="LONG-CHAIN-FATTY-ACID--COA LIGASE"/>
    <property type="match status" value="1"/>
</dbReference>
<dbReference type="PANTHER" id="PTHR43767:SF1">
    <property type="entry name" value="NONRIBOSOMAL PEPTIDE SYNTHASE PES1 (EUROFUNG)-RELATED"/>
    <property type="match status" value="1"/>
</dbReference>
<dbReference type="Pfam" id="PF00501">
    <property type="entry name" value="AMP-binding"/>
    <property type="match status" value="1"/>
</dbReference>
<dbReference type="Pfam" id="PF13193">
    <property type="entry name" value="AMP-binding_C"/>
    <property type="match status" value="1"/>
</dbReference>
<dbReference type="SUPFAM" id="SSF56801">
    <property type="entry name" value="Acetyl-CoA synthetase-like"/>
    <property type="match status" value="1"/>
</dbReference>
<dbReference type="PROSITE" id="PS00455">
    <property type="entry name" value="AMP_BINDING"/>
    <property type="match status" value="1"/>
</dbReference>
<accession>B2HI05</accession>
<keyword id="KW-0067">ATP-binding</keyword>
<keyword id="KW-0153">Cholesterol metabolism</keyword>
<keyword id="KW-0276">Fatty acid metabolism</keyword>
<keyword id="KW-0436">Ligase</keyword>
<keyword id="KW-0443">Lipid metabolism</keyword>
<keyword id="KW-0547">Nucleotide-binding</keyword>
<keyword id="KW-1185">Reference proteome</keyword>
<keyword id="KW-0753">Steroid metabolism</keyword>
<keyword id="KW-1207">Sterol metabolism</keyword>
<comment type="function">
    <text evidence="2">Catalyzes the activation of medium/long-chain fatty acids as acyl-coenzyme A (acyl-CoA), which are then transferred to the multifunctional polyketide synthase (PKS) type III for further chain extension. Also involved in the degradation of cholesterol via the degradation of the side chains of C-24 branched-chain sterols. Catalyzes the ATP-dependent CoA thioesterification of the sterol 3-oxocholest-4-en-26-oate to yield 3-oxocholest-4-en-26-oyl-CoA.</text>
</comment>
<comment type="catalytic activity">
    <reaction evidence="2">
        <text>a medium-chain fatty acid + ATP + CoA = a medium-chain fatty acyl-CoA + AMP + diphosphate</text>
        <dbReference type="Rhea" id="RHEA:48340"/>
        <dbReference type="ChEBI" id="CHEBI:30616"/>
        <dbReference type="ChEBI" id="CHEBI:33019"/>
        <dbReference type="ChEBI" id="CHEBI:57287"/>
        <dbReference type="ChEBI" id="CHEBI:59558"/>
        <dbReference type="ChEBI" id="CHEBI:90546"/>
        <dbReference type="ChEBI" id="CHEBI:456215"/>
        <dbReference type="EC" id="6.2.1.2"/>
    </reaction>
</comment>
<comment type="catalytic activity">
    <reaction evidence="2">
        <text>a long-chain fatty acid + ATP + CoA = a long-chain fatty acyl-CoA + AMP + diphosphate</text>
        <dbReference type="Rhea" id="RHEA:15421"/>
        <dbReference type="ChEBI" id="CHEBI:30616"/>
        <dbReference type="ChEBI" id="CHEBI:33019"/>
        <dbReference type="ChEBI" id="CHEBI:57287"/>
        <dbReference type="ChEBI" id="CHEBI:57560"/>
        <dbReference type="ChEBI" id="CHEBI:83139"/>
        <dbReference type="ChEBI" id="CHEBI:456215"/>
        <dbReference type="EC" id="6.2.1.3"/>
    </reaction>
</comment>
<comment type="catalytic activity">
    <reaction evidence="2">
        <text>(25S)-3-oxocholest-4-en-26-oate + ATP + CoA = (25S)-3-oxocholest-4-en-26-oyl-CoA + AMP + diphosphate</text>
        <dbReference type="Rhea" id="RHEA:29291"/>
        <dbReference type="ChEBI" id="CHEBI:30616"/>
        <dbReference type="ChEBI" id="CHEBI:33019"/>
        <dbReference type="ChEBI" id="CHEBI:57287"/>
        <dbReference type="ChEBI" id="CHEBI:71541"/>
        <dbReference type="ChEBI" id="CHEBI:83819"/>
        <dbReference type="ChEBI" id="CHEBI:456215"/>
        <dbReference type="EC" id="6.2.1.42"/>
    </reaction>
</comment>
<comment type="pathway">
    <text evidence="2">Lipid metabolism; fatty acid biosynthesis.</text>
</comment>
<comment type="pathway">
    <text evidence="2">Steroid metabolism; cholesterol metabolism.</text>
</comment>
<comment type="similarity">
    <text evidence="4">Belongs to the ATP-dependent AMP-binding enzyme family.</text>
</comment>
<sequence>MAVALNIADLAEHAIDAVPDRVALICGDEQLTYAQLEEKANRLAHHLIDQGVGKGDKVGLYCRNRIEIVIAMLGIIKAGAILINVNFRYVEGELKYLFDNSDMVALVHERQYADRVANVLPDTPNVKTILVVQDGSDKDYRRYGGVEFYSAIADSSPERDFAELQRERSADDIYILYTGGTTGFPKGVMWRHEDIYRVLFGGTDFATGEFIKDEYDLAKAAAANPPMIRYPIPPMIHGATQSATWMSIFSGQTTVLAPEFDADQVWRTISDRKVNLLFFTGDAMARPLLDALMKDNDYDLSSLFLLASTAALFSPSIKEKLLELLPNRVITDSIGSSETGFGGTSIVGAGQATTGGPRVTIDHRTVVLDEEGNEVKPGSGVRGIIAKKGNIPVGYYKDEKKTAETFKTINGVRYAIPGDYAMVEADGTVTMLGRGSVSINSGGEKIYPEEVEAALKGHPDVFDALVVGVPDPRYGQHVAAVVAPRPGSRPSLAELDGFVRSAIAGYKVPRSLWFVDEVKRSPAGKPDYRWAKEQTEARPADDVHAAHVSA</sequence>
<gene>
    <name evidence="2" type="primary">fadD19</name>
    <name type="synonym">fadD19_1</name>
    <name type="ordered locus">MMAR_5001</name>
</gene>
<evidence type="ECO:0000250" key="1"/>
<evidence type="ECO:0000250" key="2">
    <source>
        <dbReference type="UniProtKB" id="P9WQ51"/>
    </source>
</evidence>
<evidence type="ECO:0000256" key="3">
    <source>
        <dbReference type="SAM" id="MobiDB-lite"/>
    </source>
</evidence>
<evidence type="ECO:0000305" key="4"/>
<protein>
    <recommendedName>
        <fullName evidence="2">Medium/long-chain-fatty-acid--CoA/3-oxocholest-4-en-26-oate--CoA ligase</fullName>
        <shortName evidence="2">FACL</shortName>
        <ecNumber evidence="2">6.2.1.2</ecNumber>
        <ecNumber evidence="2">6.2.1.3</ecNumber>
        <ecNumber evidence="2">6.2.1.42</ecNumber>
    </recommendedName>
    <alternativeName>
        <fullName evidence="2">Acyl-CoA synthetase</fullName>
    </alternativeName>
    <alternativeName>
        <fullName evidence="2">Steroid-CoA ligase</fullName>
    </alternativeName>
    <alternativeName>
        <fullName evidence="2">Steroid-coenzyme A ligase</fullName>
    </alternativeName>
</protein>
<reference key="1">
    <citation type="journal article" date="2008" name="Genome Res.">
        <title>Insights from the complete genome sequence of Mycobacterium marinum on the evolution of Mycobacterium tuberculosis.</title>
        <authorList>
            <person name="Stinear T.P."/>
            <person name="Seemann T."/>
            <person name="Harrison P.F."/>
            <person name="Jenkin G.A."/>
            <person name="Davies J.K."/>
            <person name="Johnson P.D."/>
            <person name="Abdellah Z."/>
            <person name="Arrowsmith C."/>
            <person name="Chillingworth T."/>
            <person name="Churcher C."/>
            <person name="Clarke K."/>
            <person name="Cronin A."/>
            <person name="Davis P."/>
            <person name="Goodhead I."/>
            <person name="Holroyd N."/>
            <person name="Jagels K."/>
            <person name="Lord A."/>
            <person name="Moule S."/>
            <person name="Mungall K."/>
            <person name="Norbertczak H."/>
            <person name="Quail M.A."/>
            <person name="Rabbinowitsch E."/>
            <person name="Walker D."/>
            <person name="White B."/>
            <person name="Whitehead S."/>
            <person name="Small P.L."/>
            <person name="Brosch R."/>
            <person name="Ramakrishnan L."/>
            <person name="Fischbach M.A."/>
            <person name="Parkhill J."/>
            <person name="Cole S.T."/>
        </authorList>
    </citation>
    <scope>NUCLEOTIDE SEQUENCE [LARGE SCALE GENOMIC DNA]</scope>
    <source>
        <strain>ATCC BAA-535 / M</strain>
    </source>
</reference>
<name>FAC19_MYCMM</name>
<organism>
    <name type="scientific">Mycobacterium marinum (strain ATCC BAA-535 / M)</name>
    <dbReference type="NCBI Taxonomy" id="216594"/>
    <lineage>
        <taxon>Bacteria</taxon>
        <taxon>Bacillati</taxon>
        <taxon>Actinomycetota</taxon>
        <taxon>Actinomycetes</taxon>
        <taxon>Mycobacteriales</taxon>
        <taxon>Mycobacteriaceae</taxon>
        <taxon>Mycobacterium</taxon>
        <taxon>Mycobacterium ulcerans group</taxon>
    </lineage>
</organism>
<feature type="chain" id="PRO_0000406792" description="Medium/long-chain-fatty-acid--CoA/3-oxocholest-4-en-26-oate--CoA ligase">
    <location>
        <begin position="1"/>
        <end position="550"/>
    </location>
</feature>
<feature type="region of interest" description="Disordered" evidence="3">
    <location>
        <begin position="525"/>
        <end position="550"/>
    </location>
</feature>
<feature type="binding site" evidence="1">
    <location>
        <begin position="178"/>
        <end position="186"/>
    </location>
    <ligand>
        <name>ATP</name>
        <dbReference type="ChEBI" id="CHEBI:30616"/>
    </ligand>
</feature>
<feature type="binding site" evidence="1">
    <location>
        <position position="419"/>
    </location>
    <ligand>
        <name>ATP</name>
        <dbReference type="ChEBI" id="CHEBI:30616"/>
    </ligand>
</feature>
<feature type="binding site" evidence="1">
    <location>
        <position position="434"/>
    </location>
    <ligand>
        <name>ATP</name>
        <dbReference type="ChEBI" id="CHEBI:30616"/>
    </ligand>
</feature>
<feature type="binding site" evidence="1">
    <location>
        <position position="525"/>
    </location>
    <ligand>
        <name>ATP</name>
        <dbReference type="ChEBI" id="CHEBI:30616"/>
    </ligand>
</feature>
<proteinExistence type="inferred from homology"/>